<protein>
    <recommendedName>
        <fullName evidence="1">Phosphoribosylformylglycinamidine cyclo-ligase</fullName>
        <ecNumber evidence="1">6.3.3.1</ecNumber>
    </recommendedName>
    <alternativeName>
        <fullName evidence="1">AIR synthase</fullName>
    </alternativeName>
    <alternativeName>
        <fullName evidence="1">AIRS</fullName>
    </alternativeName>
    <alternativeName>
        <fullName evidence="1">Phosphoribosyl-aminoimidazole synthetase</fullName>
    </alternativeName>
</protein>
<gene>
    <name evidence="1" type="primary">purM</name>
    <name type="ordered locus">NTHI1704</name>
</gene>
<reference key="1">
    <citation type="journal article" date="2005" name="J. Bacteriol.">
        <title>Genomic sequence of an otitis media isolate of nontypeable Haemophilus influenzae: comparative study with H. influenzae serotype d, strain KW20.</title>
        <authorList>
            <person name="Harrison A."/>
            <person name="Dyer D.W."/>
            <person name="Gillaspy A."/>
            <person name="Ray W.C."/>
            <person name="Mungur R."/>
            <person name="Carson M.B."/>
            <person name="Zhong H."/>
            <person name="Gipson J."/>
            <person name="Gipson M."/>
            <person name="Johnson L.S."/>
            <person name="Lewis L."/>
            <person name="Bakaletz L.O."/>
            <person name="Munson R.S. Jr."/>
        </authorList>
    </citation>
    <scope>NUCLEOTIDE SEQUENCE [LARGE SCALE GENOMIC DNA]</scope>
    <source>
        <strain>86-028NP</strain>
    </source>
</reference>
<proteinExistence type="inferred from homology"/>
<name>PUR5_HAEI8</name>
<evidence type="ECO:0000255" key="1">
    <source>
        <dbReference type="HAMAP-Rule" id="MF_00741"/>
    </source>
</evidence>
<accession>Q4QKF3</accession>
<comment type="catalytic activity">
    <reaction evidence="1">
        <text>2-formamido-N(1)-(5-O-phospho-beta-D-ribosyl)acetamidine + ATP = 5-amino-1-(5-phospho-beta-D-ribosyl)imidazole + ADP + phosphate + H(+)</text>
        <dbReference type="Rhea" id="RHEA:23032"/>
        <dbReference type="ChEBI" id="CHEBI:15378"/>
        <dbReference type="ChEBI" id="CHEBI:30616"/>
        <dbReference type="ChEBI" id="CHEBI:43474"/>
        <dbReference type="ChEBI" id="CHEBI:137981"/>
        <dbReference type="ChEBI" id="CHEBI:147287"/>
        <dbReference type="ChEBI" id="CHEBI:456216"/>
        <dbReference type="EC" id="6.3.3.1"/>
    </reaction>
</comment>
<comment type="pathway">
    <text evidence="1">Purine metabolism; IMP biosynthesis via de novo pathway; 5-amino-1-(5-phospho-D-ribosyl)imidazole from N(2)-formyl-N(1)-(5-phospho-D-ribosyl)glycinamide: step 2/2.</text>
</comment>
<comment type="subcellular location">
    <subcellularLocation>
        <location evidence="1">Cytoplasm</location>
    </subcellularLocation>
</comment>
<comment type="similarity">
    <text evidence="1">Belongs to the AIR synthase family.</text>
</comment>
<sequence length="344" mass="37026">MSNTQLSYKDAGVDIHTGNELVERIKGDVKRTRRSEVMGGLGGFGALCALPTKYKEPILVSGTDGVGTKLRLAIDLKKHDTIGQDLVAMCVNDLIVQGAEPLFFLDYYATGKLDVDVAASVIKGIADGCEMSGCALVGGETTEMPGMYHEGDYDLAGFCVGVVEKSEIIDGTAVKTGDTLIALGSSGAHSNGYSLIRKVLEVSGANPADLLEGKPLSEHFLAPTKIYVKSILQLIKQTEVHAIAHLTGGGFWENIPRVLPANTKAVIDESSWQWPAIFNWLQEKGNISRYEMYRTFNCGVGMVISLPEKEVETALALLEQAGEKAWVIGKIEHLGEGEAQVEIQ</sequence>
<keyword id="KW-0067">ATP-binding</keyword>
<keyword id="KW-0963">Cytoplasm</keyword>
<keyword id="KW-0436">Ligase</keyword>
<keyword id="KW-0547">Nucleotide-binding</keyword>
<keyword id="KW-0658">Purine biosynthesis</keyword>
<organism>
    <name type="scientific">Haemophilus influenzae (strain 86-028NP)</name>
    <dbReference type="NCBI Taxonomy" id="281310"/>
    <lineage>
        <taxon>Bacteria</taxon>
        <taxon>Pseudomonadati</taxon>
        <taxon>Pseudomonadota</taxon>
        <taxon>Gammaproteobacteria</taxon>
        <taxon>Pasteurellales</taxon>
        <taxon>Pasteurellaceae</taxon>
        <taxon>Haemophilus</taxon>
    </lineage>
</organism>
<dbReference type="EC" id="6.3.3.1" evidence="1"/>
<dbReference type="EMBL" id="CP000057">
    <property type="protein sequence ID" value="AAX88494.1"/>
    <property type="molecule type" value="Genomic_DNA"/>
</dbReference>
<dbReference type="RefSeq" id="WP_011272597.1">
    <property type="nucleotide sequence ID" value="NC_007146.2"/>
</dbReference>
<dbReference type="SMR" id="Q4QKF3"/>
<dbReference type="GeneID" id="93220428"/>
<dbReference type="KEGG" id="hit:NTHI1704"/>
<dbReference type="HOGENOM" id="CLU_047116_0_0_6"/>
<dbReference type="UniPathway" id="UPA00074">
    <property type="reaction ID" value="UER00129"/>
</dbReference>
<dbReference type="Proteomes" id="UP000002525">
    <property type="component" value="Chromosome"/>
</dbReference>
<dbReference type="GO" id="GO:0005829">
    <property type="term" value="C:cytosol"/>
    <property type="evidence" value="ECO:0007669"/>
    <property type="project" value="TreeGrafter"/>
</dbReference>
<dbReference type="GO" id="GO:0005524">
    <property type="term" value="F:ATP binding"/>
    <property type="evidence" value="ECO:0007669"/>
    <property type="project" value="UniProtKB-KW"/>
</dbReference>
<dbReference type="GO" id="GO:0004637">
    <property type="term" value="F:phosphoribosylamine-glycine ligase activity"/>
    <property type="evidence" value="ECO:0007669"/>
    <property type="project" value="TreeGrafter"/>
</dbReference>
<dbReference type="GO" id="GO:0004641">
    <property type="term" value="F:phosphoribosylformylglycinamidine cyclo-ligase activity"/>
    <property type="evidence" value="ECO:0007669"/>
    <property type="project" value="UniProtKB-UniRule"/>
</dbReference>
<dbReference type="GO" id="GO:0006189">
    <property type="term" value="P:'de novo' IMP biosynthetic process"/>
    <property type="evidence" value="ECO:0007669"/>
    <property type="project" value="UniProtKB-UniRule"/>
</dbReference>
<dbReference type="GO" id="GO:0046084">
    <property type="term" value="P:adenine biosynthetic process"/>
    <property type="evidence" value="ECO:0007669"/>
    <property type="project" value="TreeGrafter"/>
</dbReference>
<dbReference type="CDD" id="cd02196">
    <property type="entry name" value="PurM"/>
    <property type="match status" value="1"/>
</dbReference>
<dbReference type="FunFam" id="3.30.1330.10:FF:000001">
    <property type="entry name" value="Phosphoribosylformylglycinamidine cyclo-ligase"/>
    <property type="match status" value="1"/>
</dbReference>
<dbReference type="FunFam" id="3.90.650.10:FF:000001">
    <property type="entry name" value="Phosphoribosylformylglycinamidine cyclo-ligase"/>
    <property type="match status" value="1"/>
</dbReference>
<dbReference type="Gene3D" id="3.90.650.10">
    <property type="entry name" value="PurM-like C-terminal domain"/>
    <property type="match status" value="1"/>
</dbReference>
<dbReference type="Gene3D" id="3.30.1330.10">
    <property type="entry name" value="PurM-like, N-terminal domain"/>
    <property type="match status" value="1"/>
</dbReference>
<dbReference type="HAMAP" id="MF_00741">
    <property type="entry name" value="AIRS"/>
    <property type="match status" value="1"/>
</dbReference>
<dbReference type="InterPro" id="IPR010918">
    <property type="entry name" value="PurM-like_C_dom"/>
</dbReference>
<dbReference type="InterPro" id="IPR036676">
    <property type="entry name" value="PurM-like_C_sf"/>
</dbReference>
<dbReference type="InterPro" id="IPR016188">
    <property type="entry name" value="PurM-like_N"/>
</dbReference>
<dbReference type="InterPro" id="IPR036921">
    <property type="entry name" value="PurM-like_N_sf"/>
</dbReference>
<dbReference type="InterPro" id="IPR004733">
    <property type="entry name" value="PurM_cligase"/>
</dbReference>
<dbReference type="NCBIfam" id="TIGR00878">
    <property type="entry name" value="purM"/>
    <property type="match status" value="1"/>
</dbReference>
<dbReference type="PANTHER" id="PTHR10520:SF12">
    <property type="entry name" value="TRIFUNCTIONAL PURINE BIOSYNTHETIC PROTEIN ADENOSINE-3"/>
    <property type="match status" value="1"/>
</dbReference>
<dbReference type="PANTHER" id="PTHR10520">
    <property type="entry name" value="TRIFUNCTIONAL PURINE BIOSYNTHETIC PROTEIN ADENOSINE-3-RELATED"/>
    <property type="match status" value="1"/>
</dbReference>
<dbReference type="Pfam" id="PF00586">
    <property type="entry name" value="AIRS"/>
    <property type="match status" value="1"/>
</dbReference>
<dbReference type="Pfam" id="PF02769">
    <property type="entry name" value="AIRS_C"/>
    <property type="match status" value="1"/>
</dbReference>
<dbReference type="SUPFAM" id="SSF56042">
    <property type="entry name" value="PurM C-terminal domain-like"/>
    <property type="match status" value="1"/>
</dbReference>
<dbReference type="SUPFAM" id="SSF55326">
    <property type="entry name" value="PurM N-terminal domain-like"/>
    <property type="match status" value="1"/>
</dbReference>
<feature type="chain" id="PRO_0000258359" description="Phosphoribosylformylglycinamidine cyclo-ligase">
    <location>
        <begin position="1"/>
        <end position="344"/>
    </location>
</feature>